<comment type="function">
    <text evidence="1">One of the primary rRNA binding proteins, it binds specifically to the 5'-end of 16S ribosomal RNA.</text>
</comment>
<comment type="subunit">
    <text evidence="1">Part of the 30S ribosomal subunit.</text>
</comment>
<comment type="similarity">
    <text evidence="1">Belongs to the universal ribosomal protein uS17 family.</text>
</comment>
<gene>
    <name evidence="1" type="primary">rpsQ</name>
    <name type="ordered locus">Pnap_0212</name>
</gene>
<protein>
    <recommendedName>
        <fullName evidence="1">Small ribosomal subunit protein uS17</fullName>
    </recommendedName>
    <alternativeName>
        <fullName evidence="2">30S ribosomal protein S17</fullName>
    </alternativeName>
</protein>
<feature type="chain" id="PRO_1000054990" description="Small ribosomal subunit protein uS17">
    <location>
        <begin position="1"/>
        <end position="89"/>
    </location>
</feature>
<proteinExistence type="inferred from homology"/>
<name>RS17_POLNA</name>
<sequence>MTEAKKSLKRTLIGKVVSDKRAKTVTVLVERRVKHELYGKIVSLSSKYHAHDEKGEFKTGDVIEITESRPISKTKNWVVTRLVQKAEIV</sequence>
<dbReference type="EMBL" id="CP000529">
    <property type="protein sequence ID" value="ABM35537.1"/>
    <property type="molecule type" value="Genomic_DNA"/>
</dbReference>
<dbReference type="RefSeq" id="WP_011799645.1">
    <property type="nucleotide sequence ID" value="NC_008781.1"/>
</dbReference>
<dbReference type="SMR" id="A1VIQ9"/>
<dbReference type="STRING" id="365044.Pnap_0212"/>
<dbReference type="KEGG" id="pna:Pnap_0212"/>
<dbReference type="eggNOG" id="COG0186">
    <property type="taxonomic scope" value="Bacteria"/>
</dbReference>
<dbReference type="HOGENOM" id="CLU_073626_1_1_4"/>
<dbReference type="OrthoDB" id="9811714at2"/>
<dbReference type="Proteomes" id="UP000000644">
    <property type="component" value="Chromosome"/>
</dbReference>
<dbReference type="GO" id="GO:0022627">
    <property type="term" value="C:cytosolic small ribosomal subunit"/>
    <property type="evidence" value="ECO:0007669"/>
    <property type="project" value="TreeGrafter"/>
</dbReference>
<dbReference type="GO" id="GO:0019843">
    <property type="term" value="F:rRNA binding"/>
    <property type="evidence" value="ECO:0007669"/>
    <property type="project" value="UniProtKB-UniRule"/>
</dbReference>
<dbReference type="GO" id="GO:0003735">
    <property type="term" value="F:structural constituent of ribosome"/>
    <property type="evidence" value="ECO:0007669"/>
    <property type="project" value="InterPro"/>
</dbReference>
<dbReference type="GO" id="GO:0006412">
    <property type="term" value="P:translation"/>
    <property type="evidence" value="ECO:0007669"/>
    <property type="project" value="UniProtKB-UniRule"/>
</dbReference>
<dbReference type="CDD" id="cd00364">
    <property type="entry name" value="Ribosomal_uS17"/>
    <property type="match status" value="1"/>
</dbReference>
<dbReference type="Gene3D" id="2.40.50.140">
    <property type="entry name" value="Nucleic acid-binding proteins"/>
    <property type="match status" value="1"/>
</dbReference>
<dbReference type="HAMAP" id="MF_01345_B">
    <property type="entry name" value="Ribosomal_uS17_B"/>
    <property type="match status" value="1"/>
</dbReference>
<dbReference type="InterPro" id="IPR012340">
    <property type="entry name" value="NA-bd_OB-fold"/>
</dbReference>
<dbReference type="InterPro" id="IPR000266">
    <property type="entry name" value="Ribosomal_uS17"/>
</dbReference>
<dbReference type="InterPro" id="IPR019984">
    <property type="entry name" value="Ribosomal_uS17_bact/chlr"/>
</dbReference>
<dbReference type="InterPro" id="IPR019979">
    <property type="entry name" value="Ribosomal_uS17_CS"/>
</dbReference>
<dbReference type="NCBIfam" id="NF004123">
    <property type="entry name" value="PRK05610.1"/>
    <property type="match status" value="1"/>
</dbReference>
<dbReference type="NCBIfam" id="TIGR03635">
    <property type="entry name" value="uS17_bact"/>
    <property type="match status" value="1"/>
</dbReference>
<dbReference type="PANTHER" id="PTHR10744">
    <property type="entry name" value="40S RIBOSOMAL PROTEIN S11 FAMILY MEMBER"/>
    <property type="match status" value="1"/>
</dbReference>
<dbReference type="PANTHER" id="PTHR10744:SF1">
    <property type="entry name" value="SMALL RIBOSOMAL SUBUNIT PROTEIN US17M"/>
    <property type="match status" value="1"/>
</dbReference>
<dbReference type="Pfam" id="PF00366">
    <property type="entry name" value="Ribosomal_S17"/>
    <property type="match status" value="1"/>
</dbReference>
<dbReference type="PRINTS" id="PR00973">
    <property type="entry name" value="RIBOSOMALS17"/>
</dbReference>
<dbReference type="SUPFAM" id="SSF50249">
    <property type="entry name" value="Nucleic acid-binding proteins"/>
    <property type="match status" value="1"/>
</dbReference>
<dbReference type="PROSITE" id="PS00056">
    <property type="entry name" value="RIBOSOMAL_S17"/>
    <property type="match status" value="1"/>
</dbReference>
<keyword id="KW-1185">Reference proteome</keyword>
<keyword id="KW-0687">Ribonucleoprotein</keyword>
<keyword id="KW-0689">Ribosomal protein</keyword>
<keyword id="KW-0694">RNA-binding</keyword>
<keyword id="KW-0699">rRNA-binding</keyword>
<organism>
    <name type="scientific">Polaromonas naphthalenivorans (strain CJ2)</name>
    <dbReference type="NCBI Taxonomy" id="365044"/>
    <lineage>
        <taxon>Bacteria</taxon>
        <taxon>Pseudomonadati</taxon>
        <taxon>Pseudomonadota</taxon>
        <taxon>Betaproteobacteria</taxon>
        <taxon>Burkholderiales</taxon>
        <taxon>Comamonadaceae</taxon>
        <taxon>Polaromonas</taxon>
    </lineage>
</organism>
<reference key="1">
    <citation type="journal article" date="2009" name="Environ. Microbiol.">
        <title>The genome of Polaromonas naphthalenivorans strain CJ2, isolated from coal tar-contaminated sediment, reveals physiological and metabolic versatility and evolution through extensive horizontal gene transfer.</title>
        <authorList>
            <person name="Yagi J.M."/>
            <person name="Sims D."/>
            <person name="Brettin T."/>
            <person name="Bruce D."/>
            <person name="Madsen E.L."/>
        </authorList>
    </citation>
    <scope>NUCLEOTIDE SEQUENCE [LARGE SCALE GENOMIC DNA]</scope>
    <source>
        <strain>CJ2</strain>
    </source>
</reference>
<accession>A1VIQ9</accession>
<evidence type="ECO:0000255" key="1">
    <source>
        <dbReference type="HAMAP-Rule" id="MF_01345"/>
    </source>
</evidence>
<evidence type="ECO:0000305" key="2"/>